<gene>
    <name evidence="1" type="primary">der</name>
    <name type="synonym">engA</name>
    <name type="ordered locus">PP_0857</name>
</gene>
<sequence length="487" mass="54154">MVPVIALVGRPNVGKSTMFNRLTKTRDAIVGDLSGLTRDRQYGDASWQGRSFILIDTGGITGDEVGMDEKMAEQSLMAIEEADYVLFLVDARAGMTAADQMIAEHLRKRNKAAILVANKIDNIDPDVARAEFSPMGMGNAIPVAGSQGRGINALMEAVLGHLPRDAEEEALEQDVAEGEEAVRIPGPSEKDGIKIAIIGRPNVGKSTLVNRMLGEERVVVYDEPGTTRDSIYIPFERDGEKYTFIDTAGVRKRGKIHEEVEKFSVVKTLQAIKDANVVIFVMDAREGVVDHDLNLLGFALEAGRAIVIALNKWDGMEPGERAYVKTELERRLFFVDFADIHFISALHGTGVGNLYKSVQAAFQSAVTRWPTSRLTQILEDAVSEHQPPMVNGRRIKLRYAHLGGANPPLIVIHGNQTDSIPKSYSRYLENTYRRVLKLVGTPIRIEYKGGENPYEGKKNTLTDRQVNKKRRLMSHHKKAEKKRRDKR</sequence>
<keyword id="KW-0342">GTP-binding</keyword>
<keyword id="KW-0547">Nucleotide-binding</keyword>
<keyword id="KW-1185">Reference proteome</keyword>
<keyword id="KW-0677">Repeat</keyword>
<keyword id="KW-0690">Ribosome biogenesis</keyword>
<protein>
    <recommendedName>
        <fullName evidence="1">GTPase Der</fullName>
    </recommendedName>
    <alternativeName>
        <fullName evidence="1">GTP-binding protein EngA</fullName>
    </alternativeName>
</protein>
<proteinExistence type="inferred from homology"/>
<reference key="1">
    <citation type="journal article" date="2002" name="Environ. Microbiol.">
        <title>Complete genome sequence and comparative analysis of the metabolically versatile Pseudomonas putida KT2440.</title>
        <authorList>
            <person name="Nelson K.E."/>
            <person name="Weinel C."/>
            <person name="Paulsen I.T."/>
            <person name="Dodson R.J."/>
            <person name="Hilbert H."/>
            <person name="Martins dos Santos V.A.P."/>
            <person name="Fouts D.E."/>
            <person name="Gill S.R."/>
            <person name="Pop M."/>
            <person name="Holmes M."/>
            <person name="Brinkac L.M."/>
            <person name="Beanan M.J."/>
            <person name="DeBoy R.T."/>
            <person name="Daugherty S.C."/>
            <person name="Kolonay J.F."/>
            <person name="Madupu R."/>
            <person name="Nelson W.C."/>
            <person name="White O."/>
            <person name="Peterson J.D."/>
            <person name="Khouri H.M."/>
            <person name="Hance I."/>
            <person name="Chris Lee P."/>
            <person name="Holtzapple E.K."/>
            <person name="Scanlan D."/>
            <person name="Tran K."/>
            <person name="Moazzez A."/>
            <person name="Utterback T.R."/>
            <person name="Rizzo M."/>
            <person name="Lee K."/>
            <person name="Kosack D."/>
            <person name="Moestl D."/>
            <person name="Wedler H."/>
            <person name="Lauber J."/>
            <person name="Stjepandic D."/>
            <person name="Hoheisel J."/>
            <person name="Straetz M."/>
            <person name="Heim S."/>
            <person name="Kiewitz C."/>
            <person name="Eisen J.A."/>
            <person name="Timmis K.N."/>
            <person name="Duesterhoeft A."/>
            <person name="Tuemmler B."/>
            <person name="Fraser C.M."/>
        </authorList>
    </citation>
    <scope>NUCLEOTIDE SEQUENCE [LARGE SCALE GENOMIC DNA]</scope>
    <source>
        <strain>ATCC 47054 / DSM 6125 / CFBP 8728 / NCIMB 11950 / KT2440</strain>
    </source>
</reference>
<dbReference type="EMBL" id="AE015451">
    <property type="protein sequence ID" value="AAN66482.1"/>
    <property type="molecule type" value="Genomic_DNA"/>
</dbReference>
<dbReference type="RefSeq" id="NP_743018.1">
    <property type="nucleotide sequence ID" value="NC_002947.4"/>
</dbReference>
<dbReference type="RefSeq" id="WP_010952071.1">
    <property type="nucleotide sequence ID" value="NZ_CP169744.1"/>
</dbReference>
<dbReference type="SMR" id="Q88PJ3"/>
<dbReference type="STRING" id="160488.PP_0857"/>
<dbReference type="PaxDb" id="160488-PP_0857"/>
<dbReference type="GeneID" id="83678210"/>
<dbReference type="KEGG" id="ppu:PP_0857"/>
<dbReference type="PATRIC" id="fig|160488.4.peg.918"/>
<dbReference type="eggNOG" id="COG1160">
    <property type="taxonomic scope" value="Bacteria"/>
</dbReference>
<dbReference type="HOGENOM" id="CLU_016077_6_2_6"/>
<dbReference type="OrthoDB" id="9805918at2"/>
<dbReference type="PhylomeDB" id="Q88PJ3"/>
<dbReference type="BioCyc" id="PPUT160488:G1G01-932-MONOMER"/>
<dbReference type="Proteomes" id="UP000000556">
    <property type="component" value="Chromosome"/>
</dbReference>
<dbReference type="GO" id="GO:0005525">
    <property type="term" value="F:GTP binding"/>
    <property type="evidence" value="ECO:0007669"/>
    <property type="project" value="UniProtKB-UniRule"/>
</dbReference>
<dbReference type="GO" id="GO:0043022">
    <property type="term" value="F:ribosome binding"/>
    <property type="evidence" value="ECO:0007669"/>
    <property type="project" value="TreeGrafter"/>
</dbReference>
<dbReference type="GO" id="GO:0042254">
    <property type="term" value="P:ribosome biogenesis"/>
    <property type="evidence" value="ECO:0007669"/>
    <property type="project" value="UniProtKB-KW"/>
</dbReference>
<dbReference type="CDD" id="cd01894">
    <property type="entry name" value="EngA1"/>
    <property type="match status" value="1"/>
</dbReference>
<dbReference type="CDD" id="cd01895">
    <property type="entry name" value="EngA2"/>
    <property type="match status" value="1"/>
</dbReference>
<dbReference type="FunFam" id="3.30.300.20:FF:000004">
    <property type="entry name" value="GTPase Der"/>
    <property type="match status" value="1"/>
</dbReference>
<dbReference type="FunFam" id="3.40.50.300:FF:000040">
    <property type="entry name" value="GTPase Der"/>
    <property type="match status" value="1"/>
</dbReference>
<dbReference type="FunFam" id="3.40.50.300:FF:000057">
    <property type="entry name" value="GTPase Der"/>
    <property type="match status" value="1"/>
</dbReference>
<dbReference type="Gene3D" id="3.30.300.20">
    <property type="match status" value="1"/>
</dbReference>
<dbReference type="Gene3D" id="3.40.50.300">
    <property type="entry name" value="P-loop containing nucleotide triphosphate hydrolases"/>
    <property type="match status" value="2"/>
</dbReference>
<dbReference type="HAMAP" id="MF_00195">
    <property type="entry name" value="GTPase_Der"/>
    <property type="match status" value="1"/>
</dbReference>
<dbReference type="InterPro" id="IPR031166">
    <property type="entry name" value="G_ENGA"/>
</dbReference>
<dbReference type="InterPro" id="IPR006073">
    <property type="entry name" value="GTP-bd"/>
</dbReference>
<dbReference type="InterPro" id="IPR016484">
    <property type="entry name" value="GTPase_Der"/>
</dbReference>
<dbReference type="InterPro" id="IPR032859">
    <property type="entry name" value="KH_dom-like"/>
</dbReference>
<dbReference type="InterPro" id="IPR015946">
    <property type="entry name" value="KH_dom-like_a/b"/>
</dbReference>
<dbReference type="InterPro" id="IPR027417">
    <property type="entry name" value="P-loop_NTPase"/>
</dbReference>
<dbReference type="InterPro" id="IPR005225">
    <property type="entry name" value="Small_GTP-bd"/>
</dbReference>
<dbReference type="NCBIfam" id="TIGR03594">
    <property type="entry name" value="GTPase_EngA"/>
    <property type="match status" value="1"/>
</dbReference>
<dbReference type="NCBIfam" id="TIGR00231">
    <property type="entry name" value="small_GTP"/>
    <property type="match status" value="2"/>
</dbReference>
<dbReference type="PANTHER" id="PTHR43834">
    <property type="entry name" value="GTPASE DER"/>
    <property type="match status" value="1"/>
</dbReference>
<dbReference type="PANTHER" id="PTHR43834:SF6">
    <property type="entry name" value="GTPASE DER"/>
    <property type="match status" value="1"/>
</dbReference>
<dbReference type="Pfam" id="PF14714">
    <property type="entry name" value="KH_dom-like"/>
    <property type="match status" value="1"/>
</dbReference>
<dbReference type="Pfam" id="PF01926">
    <property type="entry name" value="MMR_HSR1"/>
    <property type="match status" value="2"/>
</dbReference>
<dbReference type="PIRSF" id="PIRSF006485">
    <property type="entry name" value="GTP-binding_EngA"/>
    <property type="match status" value="1"/>
</dbReference>
<dbReference type="PRINTS" id="PR00326">
    <property type="entry name" value="GTP1OBG"/>
</dbReference>
<dbReference type="SUPFAM" id="SSF52540">
    <property type="entry name" value="P-loop containing nucleoside triphosphate hydrolases"/>
    <property type="match status" value="2"/>
</dbReference>
<dbReference type="PROSITE" id="PS51712">
    <property type="entry name" value="G_ENGA"/>
    <property type="match status" value="2"/>
</dbReference>
<name>DER_PSEPK</name>
<feature type="chain" id="PRO_0000179031" description="GTPase Der">
    <location>
        <begin position="1"/>
        <end position="487"/>
    </location>
</feature>
<feature type="domain" description="EngA-type G 1">
    <location>
        <begin position="3"/>
        <end position="166"/>
    </location>
</feature>
<feature type="domain" description="EngA-type G 2">
    <location>
        <begin position="193"/>
        <end position="366"/>
    </location>
</feature>
<feature type="domain" description="KH-like" evidence="1">
    <location>
        <begin position="367"/>
        <end position="451"/>
    </location>
</feature>
<feature type="region of interest" description="Disordered" evidence="2">
    <location>
        <begin position="448"/>
        <end position="487"/>
    </location>
</feature>
<feature type="compositionally biased region" description="Basic and acidic residues" evidence="2">
    <location>
        <begin position="448"/>
        <end position="461"/>
    </location>
</feature>
<feature type="compositionally biased region" description="Basic residues" evidence="2">
    <location>
        <begin position="467"/>
        <end position="487"/>
    </location>
</feature>
<feature type="binding site" evidence="1">
    <location>
        <begin position="9"/>
        <end position="16"/>
    </location>
    <ligand>
        <name>GTP</name>
        <dbReference type="ChEBI" id="CHEBI:37565"/>
        <label>1</label>
    </ligand>
</feature>
<feature type="binding site" evidence="1">
    <location>
        <begin position="56"/>
        <end position="60"/>
    </location>
    <ligand>
        <name>GTP</name>
        <dbReference type="ChEBI" id="CHEBI:37565"/>
        <label>1</label>
    </ligand>
</feature>
<feature type="binding site" evidence="1">
    <location>
        <begin position="118"/>
        <end position="121"/>
    </location>
    <ligand>
        <name>GTP</name>
        <dbReference type="ChEBI" id="CHEBI:37565"/>
        <label>1</label>
    </ligand>
</feature>
<feature type="binding site" evidence="1">
    <location>
        <begin position="199"/>
        <end position="206"/>
    </location>
    <ligand>
        <name>GTP</name>
        <dbReference type="ChEBI" id="CHEBI:37565"/>
        <label>2</label>
    </ligand>
</feature>
<feature type="binding site" evidence="1">
    <location>
        <begin position="246"/>
        <end position="250"/>
    </location>
    <ligand>
        <name>GTP</name>
        <dbReference type="ChEBI" id="CHEBI:37565"/>
        <label>2</label>
    </ligand>
</feature>
<feature type="binding site" evidence="1">
    <location>
        <begin position="311"/>
        <end position="314"/>
    </location>
    <ligand>
        <name>GTP</name>
        <dbReference type="ChEBI" id="CHEBI:37565"/>
        <label>2</label>
    </ligand>
</feature>
<organism>
    <name type="scientific">Pseudomonas putida (strain ATCC 47054 / DSM 6125 / CFBP 8728 / NCIMB 11950 / KT2440)</name>
    <dbReference type="NCBI Taxonomy" id="160488"/>
    <lineage>
        <taxon>Bacteria</taxon>
        <taxon>Pseudomonadati</taxon>
        <taxon>Pseudomonadota</taxon>
        <taxon>Gammaproteobacteria</taxon>
        <taxon>Pseudomonadales</taxon>
        <taxon>Pseudomonadaceae</taxon>
        <taxon>Pseudomonas</taxon>
    </lineage>
</organism>
<accession>Q88PJ3</accession>
<comment type="function">
    <text evidence="1">GTPase that plays an essential role in the late steps of ribosome biogenesis.</text>
</comment>
<comment type="subunit">
    <text evidence="1">Associates with the 50S ribosomal subunit.</text>
</comment>
<comment type="similarity">
    <text evidence="1">Belongs to the TRAFAC class TrmE-Era-EngA-EngB-Septin-like GTPase superfamily. EngA (Der) GTPase family.</text>
</comment>
<evidence type="ECO:0000255" key="1">
    <source>
        <dbReference type="HAMAP-Rule" id="MF_00195"/>
    </source>
</evidence>
<evidence type="ECO:0000256" key="2">
    <source>
        <dbReference type="SAM" id="MobiDB-lite"/>
    </source>
</evidence>